<keyword id="KW-0963">Cytoplasm</keyword>
<keyword id="KW-0597">Phosphoprotein</keyword>
<keyword id="KW-1185">Reference proteome</keyword>
<keyword id="KW-0728">SH3 domain</keyword>
<evidence type="ECO:0000250" key="1"/>
<evidence type="ECO:0000250" key="2">
    <source>
        <dbReference type="UniProtKB" id="G3V9M2"/>
    </source>
</evidence>
<evidence type="ECO:0000250" key="3">
    <source>
        <dbReference type="UniProtKB" id="Q13387"/>
    </source>
</evidence>
<evidence type="ECO:0000255" key="4">
    <source>
        <dbReference type="PROSITE-ProRule" id="PRU00148"/>
    </source>
</evidence>
<evidence type="ECO:0000255" key="5">
    <source>
        <dbReference type="PROSITE-ProRule" id="PRU00192"/>
    </source>
</evidence>
<evidence type="ECO:0000256" key="6">
    <source>
        <dbReference type="SAM" id="MobiDB-lite"/>
    </source>
</evidence>
<evidence type="ECO:0000269" key="7">
    <source>
    </source>
</evidence>
<evidence type="ECO:0000269" key="8">
    <source>
    </source>
</evidence>
<evidence type="ECO:0000269" key="9">
    <source>
    </source>
</evidence>
<evidence type="ECO:0000269" key="10">
    <source>
    </source>
</evidence>
<evidence type="ECO:0000305" key="11"/>
<evidence type="ECO:0007744" key="12">
    <source>
    </source>
</evidence>
<accession>Q9ERE9</accession>
<accession>Q9CXI4</accession>
<comment type="function">
    <text evidence="1">The JNK-interacting protein (JIP) group of scaffold proteins selectively mediates JNK signaling by aggregating specific components of the MAPK cascade to form a functional JNK signaling module. JIP2 inhibits IL1 beta-induced apoptosis in insulin-secreting cells (By similarity).</text>
</comment>
<comment type="subunit">
    <text evidence="2 3 7 8 9 10">Forms homo- or heterooligomeric complexes. Binds specific components of the JNK signaling pathway namely JNK1, JNK2, JNK3, MAP2K7, MAP3K10, MAP3K11, MAP3K12 and MAPK13 (By similarity). Also binds the proline-rich domain-containing splice variant of apolipoprotein E receptor 2 (ApoER2). Binds the TPR motif-containing C-terminal of kinesin light chain. Binds the cytoplasmic tails of LRP1 and LRP2 (Megalin). Interacts with DCLK2. Interacts with FGF13; enables the interaction with MAPK13 and may regulate the MAPK8IP2 scaffolding activity. Interacts with TIAM1 and TIAM2 (PubMed:10827199, PubMed:11378392, PubMed:16628014, PubMed:19893486). Interacts with SH3RF2 (By similarity).</text>
</comment>
<comment type="interaction">
    <interactant intactId="EBI-74576">
        <id>Q9ERE9</id>
    </interactant>
    <interactant intactId="EBI-300955">
        <id>Q91ZX7</id>
        <label>Lrp1</label>
    </interactant>
    <organismsDiffer>false</organismsDiffer>
    <experiments>2</experiments>
</comment>
<comment type="interaction">
    <interactant intactId="EBI-74576">
        <id>Q9ERE9</id>
    </interactant>
    <interactant intactId="EBI-300875">
        <id>A2ARV4</id>
        <label>Lrp2</label>
    </interactant>
    <organismsDiffer>false</organismsDiffer>
    <experiments>2</experiments>
</comment>
<comment type="interaction">
    <interactant intactId="EBI-74576">
        <id>Q9ERE9</id>
    </interactant>
    <interactant intactId="EBI-74135">
        <id>P14599</id>
        <label>Appl</label>
    </interactant>
    <organismsDiffer>true</organismsDiffer>
    <experiments>2</experiments>
</comment>
<comment type="subcellular location">
    <subcellularLocation>
        <location evidence="3">Cytoplasm</location>
    </subcellularLocation>
    <text evidence="3">Accumulates in cell surface projections.</text>
</comment>
<comment type="tissue specificity">
    <text>Highly expressed in brain. Expressed in all neurons. Also expressed in testis, primarily in the epididymal epidermis.</text>
</comment>
<comment type="induction">
    <text>Upon neuron differentiation.</text>
</comment>
<comment type="similarity">
    <text evidence="11">Belongs to the JIP scaffold family.</text>
</comment>
<comment type="sequence caution" evidence="11">
    <conflict type="erroneous termination">
        <sequence resource="EMBL" id="AK014339"/>
    </conflict>
    <text>Truncated C-terminus.</text>
</comment>
<sequence length="830" mass="89900">MADRAEMFSLSTFHSLSPPGCRPPQDISLEEFDDEDLSEITDDCGLGLSYDSDHCEKDSLSLGRSEQPHPICSFQDDFQEFEMIDDNEEEDDEEEEEEEEEEEDGDRQGKAGGGPGSQALAGDSLIPSPSLEESHKLRPTTLHLTTLGAQDSLNNNNGGFTSAPPSSWQETVLRSPAQEPLKELPAPLLPAEEERHEVQSLARPGCDCEGNQPPEPPASSGGASPSSDPGIEADLRSHSSGGHEGRRSSQELSSPGSDSEDAGGARLGRMISSISETELELSSDGGSSSGRSSHLTNSIEEASSPASEPEPEPEPLHEPPRRPAFLPVGQDDTNSEYESGSESEPDLSEDADSPWLLSNLVSRMISEGSSPIRCPGQCLSPAPRLPEEAASQANSVPQDCQDPEAGPHVELVDMDTLCGPPPPAPAAPRLGPAQPGPCLFLSNPTRDTITPLWATPGRTARPGRSCSAACSEEEEEDEEEDEEDEEDAEDSVVPPGSRTTGSTAPLDASLVYDAVKYTLVVDEHTQLELVSLRRCAGLGNDSEEDSSCEASEEEAGATLLGSDQVPEDASPDSPDLTFSKKFLNVFVNSTSRSSSTESFGLFSCVVNGEEREQTHRAVFRFIPRHPDELELDVDDPVLVEAEEDDFWFRGFNMRTGERGVFPAFYAHAVPGPAKDLLGSKRSPCWVDRFDVQFLGSVEVPCHQGNGILCAAMQKIATARKLTVHLRPPASCDLEISLRGVKLSLSGGGPEFQRCSHFFQMKNISFCGCHPRNSCYFGFITKHPLLSRFACHVFVSQESMRPVARSVGRAFLEYYQEHLAFACPTEDIYLE</sequence>
<dbReference type="EMBL" id="AF310135">
    <property type="protein sequence ID" value="AAG31800.1"/>
    <property type="molecule type" value="mRNA"/>
</dbReference>
<dbReference type="EMBL" id="AK014339">
    <property type="status" value="NOT_ANNOTATED_CDS"/>
    <property type="molecule type" value="mRNA"/>
</dbReference>
<dbReference type="CCDS" id="CCDS27752.1"/>
<dbReference type="RefSeq" id="NP_068740.3">
    <property type="nucleotide sequence ID" value="NM_021921.3"/>
</dbReference>
<dbReference type="SMR" id="Q9ERE9"/>
<dbReference type="BioGRID" id="208626">
    <property type="interactions" value="6"/>
</dbReference>
<dbReference type="FunCoup" id="Q9ERE9">
    <property type="interactions" value="553"/>
</dbReference>
<dbReference type="IntAct" id="Q9ERE9">
    <property type="interactions" value="8"/>
</dbReference>
<dbReference type="MINT" id="Q9ERE9"/>
<dbReference type="STRING" id="10090.ENSMUSP00000023291"/>
<dbReference type="GlyGen" id="Q9ERE9">
    <property type="glycosylation" value="2 sites, 1 N-linked glycan (1 site)"/>
</dbReference>
<dbReference type="iPTMnet" id="Q9ERE9"/>
<dbReference type="PhosphoSitePlus" id="Q9ERE9"/>
<dbReference type="PaxDb" id="10090-ENSMUSP00000023291"/>
<dbReference type="ProteomicsDB" id="269235"/>
<dbReference type="ABCD" id="Q9ERE9">
    <property type="antibodies" value="1 sequenced antibody"/>
</dbReference>
<dbReference type="Antibodypedia" id="28835">
    <property type="antibodies" value="230 antibodies from 28 providers"/>
</dbReference>
<dbReference type="DNASU" id="60597"/>
<dbReference type="Ensembl" id="ENSMUST00000023291.6">
    <property type="protein sequence ID" value="ENSMUSP00000023291.6"/>
    <property type="gene ID" value="ENSMUSG00000022619.6"/>
</dbReference>
<dbReference type="GeneID" id="60597"/>
<dbReference type="KEGG" id="mmu:60597"/>
<dbReference type="UCSC" id="uc007xgx.2">
    <property type="organism name" value="mouse"/>
</dbReference>
<dbReference type="AGR" id="MGI:1926555"/>
<dbReference type="CTD" id="23542"/>
<dbReference type="MGI" id="MGI:1926555">
    <property type="gene designation" value="Mapk8ip2"/>
</dbReference>
<dbReference type="VEuPathDB" id="HostDB:ENSMUSG00000022619"/>
<dbReference type="eggNOG" id="KOG3775">
    <property type="taxonomic scope" value="Eukaryota"/>
</dbReference>
<dbReference type="GeneTree" id="ENSGT00940000160461"/>
<dbReference type="HOGENOM" id="CLU_006711_0_0_1"/>
<dbReference type="InParanoid" id="Q9ERE9"/>
<dbReference type="OMA" id="EPHKNRP"/>
<dbReference type="OrthoDB" id="5965083at2759"/>
<dbReference type="PhylomeDB" id="Q9ERE9"/>
<dbReference type="TreeFam" id="TF325073"/>
<dbReference type="BioGRID-ORCS" id="60597">
    <property type="hits" value="5 hits in 79 CRISPR screens"/>
</dbReference>
<dbReference type="ChiTaRS" id="Mapk8ip2">
    <property type="organism name" value="mouse"/>
</dbReference>
<dbReference type="PRO" id="PR:Q9ERE9"/>
<dbReference type="Proteomes" id="UP000000589">
    <property type="component" value="Chromosome 15"/>
</dbReference>
<dbReference type="RNAct" id="Q9ERE9">
    <property type="molecule type" value="protein"/>
</dbReference>
<dbReference type="Bgee" id="ENSMUSG00000022619">
    <property type="expression patterns" value="Expressed in supraoptic nucleus and 166 other cell types or tissues"/>
</dbReference>
<dbReference type="ExpressionAtlas" id="Q9ERE9">
    <property type="expression patterns" value="baseline and differential"/>
</dbReference>
<dbReference type="GO" id="GO:0005737">
    <property type="term" value="C:cytoplasm"/>
    <property type="evidence" value="ECO:0000314"/>
    <property type="project" value="MGI"/>
</dbReference>
<dbReference type="GO" id="GO:0043025">
    <property type="term" value="C:neuronal cell body"/>
    <property type="evidence" value="ECO:0000314"/>
    <property type="project" value="MGI"/>
</dbReference>
<dbReference type="GO" id="GO:0014069">
    <property type="term" value="C:postsynaptic density"/>
    <property type="evidence" value="ECO:0000314"/>
    <property type="project" value="BHF-UCL"/>
</dbReference>
<dbReference type="GO" id="GO:0032991">
    <property type="term" value="C:protein-containing complex"/>
    <property type="evidence" value="ECO:0007669"/>
    <property type="project" value="Ensembl"/>
</dbReference>
<dbReference type="GO" id="GO:0019894">
    <property type="term" value="F:kinesin binding"/>
    <property type="evidence" value="ECO:0000353"/>
    <property type="project" value="UniProtKB"/>
</dbReference>
<dbReference type="GO" id="GO:0005078">
    <property type="term" value="F:MAP-kinase scaffold activity"/>
    <property type="evidence" value="ECO:0007669"/>
    <property type="project" value="Ensembl"/>
</dbReference>
<dbReference type="GO" id="GO:0030295">
    <property type="term" value="F:protein kinase activator activity"/>
    <property type="evidence" value="ECO:0000266"/>
    <property type="project" value="MGI"/>
</dbReference>
<dbReference type="GO" id="GO:0019901">
    <property type="term" value="F:protein kinase binding"/>
    <property type="evidence" value="ECO:0000250"/>
    <property type="project" value="UniProtKB"/>
</dbReference>
<dbReference type="GO" id="GO:0044877">
    <property type="term" value="F:protein-containing complex binding"/>
    <property type="evidence" value="ECO:0007669"/>
    <property type="project" value="Ensembl"/>
</dbReference>
<dbReference type="GO" id="GO:0001662">
    <property type="term" value="P:behavioral fear response"/>
    <property type="evidence" value="ECO:0000315"/>
    <property type="project" value="BHF-UCL"/>
</dbReference>
<dbReference type="GO" id="GO:0048813">
    <property type="term" value="P:dendrite morphogenesis"/>
    <property type="evidence" value="ECO:0000315"/>
    <property type="project" value="BHF-UCL"/>
</dbReference>
<dbReference type="GO" id="GO:0007254">
    <property type="term" value="P:JNK cascade"/>
    <property type="evidence" value="ECO:0000314"/>
    <property type="project" value="MGI"/>
</dbReference>
<dbReference type="GO" id="GO:0000165">
    <property type="term" value="P:MAPK cascade"/>
    <property type="evidence" value="ECO:0000266"/>
    <property type="project" value="MGI"/>
</dbReference>
<dbReference type="GO" id="GO:0007617">
    <property type="term" value="P:mating behavior"/>
    <property type="evidence" value="ECO:0000315"/>
    <property type="project" value="BHF-UCL"/>
</dbReference>
<dbReference type="GO" id="GO:0098815">
    <property type="term" value="P:modulation of excitatory postsynaptic potential"/>
    <property type="evidence" value="ECO:0000315"/>
    <property type="project" value="BHF-UCL"/>
</dbReference>
<dbReference type="GO" id="GO:2001234">
    <property type="term" value="P:negative regulation of apoptotic signaling pathway"/>
    <property type="evidence" value="ECO:0007669"/>
    <property type="project" value="Ensembl"/>
</dbReference>
<dbReference type="GO" id="GO:0046958">
    <property type="term" value="P:nonassociative learning"/>
    <property type="evidence" value="ECO:0000315"/>
    <property type="project" value="BHF-UCL"/>
</dbReference>
<dbReference type="GO" id="GO:0032874">
    <property type="term" value="P:positive regulation of stress-activated MAPK cascade"/>
    <property type="evidence" value="ECO:0007669"/>
    <property type="project" value="Ensembl"/>
</dbReference>
<dbReference type="GO" id="GO:0046328">
    <property type="term" value="P:regulation of JNK cascade"/>
    <property type="evidence" value="ECO:0000250"/>
    <property type="project" value="UniProtKB"/>
</dbReference>
<dbReference type="GO" id="GO:0051966">
    <property type="term" value="P:regulation of synaptic transmission, glutamatergic"/>
    <property type="evidence" value="ECO:0000315"/>
    <property type="project" value="BHF-UCL"/>
</dbReference>
<dbReference type="GO" id="GO:0035176">
    <property type="term" value="P:social behavior"/>
    <property type="evidence" value="ECO:0000315"/>
    <property type="project" value="BHF-UCL"/>
</dbReference>
<dbReference type="CDD" id="cd01212">
    <property type="entry name" value="PTB_JIP"/>
    <property type="match status" value="1"/>
</dbReference>
<dbReference type="CDD" id="cd11942">
    <property type="entry name" value="SH3_JIP2"/>
    <property type="match status" value="1"/>
</dbReference>
<dbReference type="FunFam" id="2.30.29.30:FF:000108">
    <property type="entry name" value="C-Jun-amino-terminal kinase-interacting protein 1 isoform X2"/>
    <property type="match status" value="1"/>
</dbReference>
<dbReference type="FunFam" id="2.30.30.40:FF:000032">
    <property type="entry name" value="Putative C-Jun-amino-terminal kinase-interacting protein 2"/>
    <property type="match status" value="1"/>
</dbReference>
<dbReference type="Gene3D" id="2.30.29.30">
    <property type="entry name" value="Pleckstrin-homology domain (PH domain)/Phosphotyrosine-binding domain (PTB)"/>
    <property type="match status" value="1"/>
</dbReference>
<dbReference type="Gene3D" id="2.30.30.40">
    <property type="entry name" value="SH3 Domains"/>
    <property type="match status" value="1"/>
</dbReference>
<dbReference type="InterPro" id="IPR047178">
    <property type="entry name" value="JIP1_scaffold"/>
</dbReference>
<dbReference type="InterPro" id="IPR035637">
    <property type="entry name" value="JIP2_SH3"/>
</dbReference>
<dbReference type="InterPro" id="IPR011993">
    <property type="entry name" value="PH-like_dom_sf"/>
</dbReference>
<dbReference type="InterPro" id="IPR006020">
    <property type="entry name" value="PTB/PI_dom"/>
</dbReference>
<dbReference type="InterPro" id="IPR001452">
    <property type="entry name" value="SH3_domain"/>
</dbReference>
<dbReference type="PANTHER" id="PTHR47437:SF2">
    <property type="entry name" value="C-JUN-AMINO-TERMINAL KINASE-INTERACTING PROTEIN 2"/>
    <property type="match status" value="1"/>
</dbReference>
<dbReference type="PANTHER" id="PTHR47437">
    <property type="entry name" value="JNK-INTERACTING PROTEIN 1-LIKE PROTEIN"/>
    <property type="match status" value="1"/>
</dbReference>
<dbReference type="Pfam" id="PF00640">
    <property type="entry name" value="PID"/>
    <property type="match status" value="1"/>
</dbReference>
<dbReference type="Pfam" id="PF14604">
    <property type="entry name" value="SH3_9"/>
    <property type="match status" value="1"/>
</dbReference>
<dbReference type="SMART" id="SM00462">
    <property type="entry name" value="PTB"/>
    <property type="match status" value="1"/>
</dbReference>
<dbReference type="SMART" id="SM00326">
    <property type="entry name" value="SH3"/>
    <property type="match status" value="1"/>
</dbReference>
<dbReference type="SUPFAM" id="SSF50729">
    <property type="entry name" value="PH domain-like"/>
    <property type="match status" value="1"/>
</dbReference>
<dbReference type="PROSITE" id="PS01179">
    <property type="entry name" value="PID"/>
    <property type="match status" value="1"/>
</dbReference>
<dbReference type="PROSITE" id="PS50002">
    <property type="entry name" value="SH3"/>
    <property type="match status" value="1"/>
</dbReference>
<gene>
    <name type="primary">Mapk8ip2</name>
    <name type="synonym">Ib2</name>
    <name type="synonym">Jip2</name>
</gene>
<reference key="1">
    <citation type="journal article" date="2000" name="J. Biol. Chem.">
        <title>The reelin receptor ApoER2 recruits JNK-interacting proteins-1 and -2.</title>
        <authorList>
            <person name="Stockinger W."/>
            <person name="Brandes C."/>
            <person name="Fasching D."/>
            <person name="Hermann M."/>
            <person name="Gotthardt M."/>
            <person name="Herz J."/>
            <person name="Schneider W.J."/>
            <person name="Nimpf J."/>
        </authorList>
    </citation>
    <scope>NUCLEOTIDE SEQUENCE [MRNA]</scope>
    <scope>INTERACTION WITH APOER2</scope>
    <source>
        <strain>BALB/cJ</strain>
        <tissue>Brain</tissue>
    </source>
</reference>
<reference key="2">
    <citation type="journal article" date="2005" name="Science">
        <title>The transcriptional landscape of the mammalian genome.</title>
        <authorList>
            <person name="Carninci P."/>
            <person name="Kasukawa T."/>
            <person name="Katayama S."/>
            <person name="Gough J."/>
            <person name="Frith M.C."/>
            <person name="Maeda N."/>
            <person name="Oyama R."/>
            <person name="Ravasi T."/>
            <person name="Lenhard B."/>
            <person name="Wells C."/>
            <person name="Kodzius R."/>
            <person name="Shimokawa K."/>
            <person name="Bajic V.B."/>
            <person name="Brenner S.E."/>
            <person name="Batalov S."/>
            <person name="Forrest A.R."/>
            <person name="Zavolan M."/>
            <person name="Davis M.J."/>
            <person name="Wilming L.G."/>
            <person name="Aidinis V."/>
            <person name="Allen J.E."/>
            <person name="Ambesi-Impiombato A."/>
            <person name="Apweiler R."/>
            <person name="Aturaliya R.N."/>
            <person name="Bailey T.L."/>
            <person name="Bansal M."/>
            <person name="Baxter L."/>
            <person name="Beisel K.W."/>
            <person name="Bersano T."/>
            <person name="Bono H."/>
            <person name="Chalk A.M."/>
            <person name="Chiu K.P."/>
            <person name="Choudhary V."/>
            <person name="Christoffels A."/>
            <person name="Clutterbuck D.R."/>
            <person name="Crowe M.L."/>
            <person name="Dalla E."/>
            <person name="Dalrymple B.P."/>
            <person name="de Bono B."/>
            <person name="Della Gatta G."/>
            <person name="di Bernardo D."/>
            <person name="Down T."/>
            <person name="Engstrom P."/>
            <person name="Fagiolini M."/>
            <person name="Faulkner G."/>
            <person name="Fletcher C.F."/>
            <person name="Fukushima T."/>
            <person name="Furuno M."/>
            <person name="Futaki S."/>
            <person name="Gariboldi M."/>
            <person name="Georgii-Hemming P."/>
            <person name="Gingeras T.R."/>
            <person name="Gojobori T."/>
            <person name="Green R.E."/>
            <person name="Gustincich S."/>
            <person name="Harbers M."/>
            <person name="Hayashi Y."/>
            <person name="Hensch T.K."/>
            <person name="Hirokawa N."/>
            <person name="Hill D."/>
            <person name="Huminiecki L."/>
            <person name="Iacono M."/>
            <person name="Ikeo K."/>
            <person name="Iwama A."/>
            <person name="Ishikawa T."/>
            <person name="Jakt M."/>
            <person name="Kanapin A."/>
            <person name="Katoh M."/>
            <person name="Kawasawa Y."/>
            <person name="Kelso J."/>
            <person name="Kitamura H."/>
            <person name="Kitano H."/>
            <person name="Kollias G."/>
            <person name="Krishnan S.P."/>
            <person name="Kruger A."/>
            <person name="Kummerfeld S.K."/>
            <person name="Kurochkin I.V."/>
            <person name="Lareau L.F."/>
            <person name="Lazarevic D."/>
            <person name="Lipovich L."/>
            <person name="Liu J."/>
            <person name="Liuni S."/>
            <person name="McWilliam S."/>
            <person name="Madan Babu M."/>
            <person name="Madera M."/>
            <person name="Marchionni L."/>
            <person name="Matsuda H."/>
            <person name="Matsuzawa S."/>
            <person name="Miki H."/>
            <person name="Mignone F."/>
            <person name="Miyake S."/>
            <person name="Morris K."/>
            <person name="Mottagui-Tabar S."/>
            <person name="Mulder N."/>
            <person name="Nakano N."/>
            <person name="Nakauchi H."/>
            <person name="Ng P."/>
            <person name="Nilsson R."/>
            <person name="Nishiguchi S."/>
            <person name="Nishikawa S."/>
            <person name="Nori F."/>
            <person name="Ohara O."/>
            <person name="Okazaki Y."/>
            <person name="Orlando V."/>
            <person name="Pang K.C."/>
            <person name="Pavan W.J."/>
            <person name="Pavesi G."/>
            <person name="Pesole G."/>
            <person name="Petrovsky N."/>
            <person name="Piazza S."/>
            <person name="Reed J."/>
            <person name="Reid J.F."/>
            <person name="Ring B.Z."/>
            <person name="Ringwald M."/>
            <person name="Rost B."/>
            <person name="Ruan Y."/>
            <person name="Salzberg S.L."/>
            <person name="Sandelin A."/>
            <person name="Schneider C."/>
            <person name="Schoenbach C."/>
            <person name="Sekiguchi K."/>
            <person name="Semple C.A."/>
            <person name="Seno S."/>
            <person name="Sessa L."/>
            <person name="Sheng Y."/>
            <person name="Shibata Y."/>
            <person name="Shimada H."/>
            <person name="Shimada K."/>
            <person name="Silva D."/>
            <person name="Sinclair B."/>
            <person name="Sperling S."/>
            <person name="Stupka E."/>
            <person name="Sugiura K."/>
            <person name="Sultana R."/>
            <person name="Takenaka Y."/>
            <person name="Taki K."/>
            <person name="Tammoja K."/>
            <person name="Tan S.L."/>
            <person name="Tang S."/>
            <person name="Taylor M.S."/>
            <person name="Tegner J."/>
            <person name="Teichmann S.A."/>
            <person name="Ueda H.R."/>
            <person name="van Nimwegen E."/>
            <person name="Verardo R."/>
            <person name="Wei C.L."/>
            <person name="Yagi K."/>
            <person name="Yamanishi H."/>
            <person name="Zabarovsky E."/>
            <person name="Zhu S."/>
            <person name="Zimmer A."/>
            <person name="Hide W."/>
            <person name="Bult C."/>
            <person name="Grimmond S.M."/>
            <person name="Teasdale R.D."/>
            <person name="Liu E.T."/>
            <person name="Brusic V."/>
            <person name="Quackenbush J."/>
            <person name="Wahlestedt C."/>
            <person name="Mattick J.S."/>
            <person name="Hume D.A."/>
            <person name="Kai C."/>
            <person name="Sasaki D."/>
            <person name="Tomaru Y."/>
            <person name="Fukuda S."/>
            <person name="Kanamori-Katayama M."/>
            <person name="Suzuki M."/>
            <person name="Aoki J."/>
            <person name="Arakawa T."/>
            <person name="Iida J."/>
            <person name="Imamura K."/>
            <person name="Itoh M."/>
            <person name="Kato T."/>
            <person name="Kawaji H."/>
            <person name="Kawagashira N."/>
            <person name="Kawashima T."/>
            <person name="Kojima M."/>
            <person name="Kondo S."/>
            <person name="Konno H."/>
            <person name="Nakano K."/>
            <person name="Ninomiya N."/>
            <person name="Nishio T."/>
            <person name="Okada M."/>
            <person name="Plessy C."/>
            <person name="Shibata K."/>
            <person name="Shiraki T."/>
            <person name="Suzuki S."/>
            <person name="Tagami M."/>
            <person name="Waki K."/>
            <person name="Watahiki A."/>
            <person name="Okamura-Oho Y."/>
            <person name="Suzuki H."/>
            <person name="Kawai J."/>
            <person name="Hayashizaki Y."/>
        </authorList>
    </citation>
    <scope>NUCLEOTIDE SEQUENCE [LARGE SCALE MRNA]</scope>
    <source>
        <strain>C57BL/6J</strain>
        <tissue>Embryonic head</tissue>
    </source>
</reference>
<reference key="3">
    <citation type="journal article" date="2001" name="Curr. Biol.">
        <title>Fibroblast growth factor homologous factors are intracellular signaling proteins.</title>
        <authorList>
            <person name="Schoorlemmer J."/>
            <person name="Goldfarb M."/>
        </authorList>
    </citation>
    <scope>INTERACTION WITH FGF13 AND MAPK13</scope>
</reference>
<reference key="4">
    <citation type="journal article" date="2006" name="Cell Cycle">
        <title>Common and divergent roles for members of the mouse DCX superfamily.</title>
        <authorList>
            <person name="Coquelle F.M."/>
            <person name="Levy T."/>
            <person name="Bergmann S."/>
            <person name="Wolf S.G."/>
            <person name="Bar-El D."/>
            <person name="Sapir T."/>
            <person name="Brody Y."/>
            <person name="Orr I."/>
            <person name="Barkai N."/>
            <person name="Eichele G."/>
            <person name="Reiner O."/>
        </authorList>
    </citation>
    <scope>INTERACTION WITH DCLK2</scope>
</reference>
<reference key="5">
    <citation type="journal article" date="2010" name="Cell">
        <title>A tissue-specific atlas of mouse protein phosphorylation and expression.</title>
        <authorList>
            <person name="Huttlin E.L."/>
            <person name="Jedrychowski M.P."/>
            <person name="Elias J.E."/>
            <person name="Goswami T."/>
            <person name="Rad R."/>
            <person name="Beausoleil S.A."/>
            <person name="Villen J."/>
            <person name="Haas W."/>
            <person name="Sowa M.E."/>
            <person name="Gygi S.P."/>
        </authorList>
    </citation>
    <scope>PHOSPHORYLATION [LARGE SCALE ANALYSIS] AT SER-257; SER-304 AND SER-307</scope>
    <scope>IDENTIFICATION BY MASS SPECTROMETRY [LARGE SCALE ANALYSIS]</scope>
    <source>
        <tissue>Brain</tissue>
        <tissue>Testis</tissue>
    </source>
</reference>
<reference key="6">
    <citation type="journal article" date="2010" name="EMBO J.">
        <title>The PHCCEx domain of Tiam1/2 is a novel protein- and membrane-binding module.</title>
        <authorList>
            <person name="Terawaki S."/>
            <person name="Kitano K."/>
            <person name="Mori T."/>
            <person name="Zhai Y."/>
            <person name="Higuchi Y."/>
            <person name="Itoh N."/>
            <person name="Watanabe T."/>
            <person name="Kaibuchi K."/>
            <person name="Hakoshima T."/>
        </authorList>
    </citation>
    <scope>INTERACTION WITH TIAM1 AND TIAM2</scope>
</reference>
<name>JIP2_MOUSE</name>
<organism>
    <name type="scientific">Mus musculus</name>
    <name type="common">Mouse</name>
    <dbReference type="NCBI Taxonomy" id="10090"/>
    <lineage>
        <taxon>Eukaryota</taxon>
        <taxon>Metazoa</taxon>
        <taxon>Chordata</taxon>
        <taxon>Craniata</taxon>
        <taxon>Vertebrata</taxon>
        <taxon>Euteleostomi</taxon>
        <taxon>Mammalia</taxon>
        <taxon>Eutheria</taxon>
        <taxon>Euarchontoglires</taxon>
        <taxon>Glires</taxon>
        <taxon>Rodentia</taxon>
        <taxon>Myomorpha</taxon>
        <taxon>Muroidea</taxon>
        <taxon>Muridae</taxon>
        <taxon>Murinae</taxon>
        <taxon>Mus</taxon>
        <taxon>Mus</taxon>
    </lineage>
</organism>
<feature type="chain" id="PRO_0000220632" description="C-Jun-amino-terminal kinase-interacting protein 2">
    <location>
        <begin position="1"/>
        <end position="830"/>
    </location>
</feature>
<feature type="domain" description="SH3" evidence="5">
    <location>
        <begin position="610"/>
        <end position="671"/>
    </location>
</feature>
<feature type="domain" description="PID" evidence="4">
    <location>
        <begin position="683"/>
        <end position="819"/>
    </location>
</feature>
<feature type="region of interest" description="Disordered" evidence="6">
    <location>
        <begin position="1"/>
        <end position="26"/>
    </location>
</feature>
<feature type="region of interest" description="Disordered" evidence="6">
    <location>
        <begin position="44"/>
        <end position="354"/>
    </location>
</feature>
<feature type="region of interest" description="JNK-binding domain (JBD)">
    <location>
        <begin position="111"/>
        <end position="278"/>
    </location>
</feature>
<feature type="region of interest" description="Necessary for interaction with FGF13" evidence="3">
    <location>
        <begin position="242"/>
        <end position="504"/>
    </location>
</feature>
<feature type="region of interest" description="Disordered" evidence="6">
    <location>
        <begin position="367"/>
        <end position="438"/>
    </location>
</feature>
<feature type="region of interest" description="Disordered" evidence="6">
    <location>
        <begin position="452"/>
        <end position="504"/>
    </location>
</feature>
<feature type="region of interest" description="Disordered" evidence="6">
    <location>
        <begin position="539"/>
        <end position="574"/>
    </location>
</feature>
<feature type="compositionally biased region" description="Acidic residues" evidence="6">
    <location>
        <begin position="77"/>
        <end position="105"/>
    </location>
</feature>
<feature type="compositionally biased region" description="Polar residues" evidence="6">
    <location>
        <begin position="142"/>
        <end position="172"/>
    </location>
</feature>
<feature type="compositionally biased region" description="Low complexity" evidence="6">
    <location>
        <begin position="176"/>
        <end position="190"/>
    </location>
</feature>
<feature type="compositionally biased region" description="Low complexity" evidence="6">
    <location>
        <begin position="218"/>
        <end position="227"/>
    </location>
</feature>
<feature type="compositionally biased region" description="Basic and acidic residues" evidence="6">
    <location>
        <begin position="233"/>
        <end position="249"/>
    </location>
</feature>
<feature type="compositionally biased region" description="Low complexity" evidence="6">
    <location>
        <begin position="271"/>
        <end position="307"/>
    </location>
</feature>
<feature type="compositionally biased region" description="Acidic residues" evidence="6">
    <location>
        <begin position="333"/>
        <end position="352"/>
    </location>
</feature>
<feature type="compositionally biased region" description="Low complexity" evidence="6">
    <location>
        <begin position="427"/>
        <end position="437"/>
    </location>
</feature>
<feature type="compositionally biased region" description="Acidic residues" evidence="6">
    <location>
        <begin position="471"/>
        <end position="490"/>
    </location>
</feature>
<feature type="compositionally biased region" description="Acidic residues" evidence="6">
    <location>
        <begin position="541"/>
        <end position="555"/>
    </location>
</feature>
<feature type="modified residue" description="Phosphoserine" evidence="12">
    <location>
        <position position="257"/>
    </location>
</feature>
<feature type="modified residue" description="Phosphoserine" evidence="12">
    <location>
        <position position="304"/>
    </location>
</feature>
<feature type="modified residue" description="Phosphoserine" evidence="12">
    <location>
        <position position="307"/>
    </location>
</feature>
<feature type="sequence conflict" description="In Ref. 2; AK014339." evidence="11" ref="2">
    <original>P</original>
    <variation>Q</variation>
    <location>
        <position position="216"/>
    </location>
</feature>
<proteinExistence type="evidence at protein level"/>
<protein>
    <recommendedName>
        <fullName>C-Jun-amino-terminal kinase-interacting protein 2</fullName>
        <shortName>JIP-2</shortName>
        <shortName>JNK-interacting protein 2</shortName>
    </recommendedName>
    <alternativeName>
        <fullName>Islet-brain-2</fullName>
        <shortName>IB-2</shortName>
    </alternativeName>
    <alternativeName>
        <fullName>JNK MAP kinase scaffold protein 2</fullName>
    </alternativeName>
    <alternativeName>
        <fullName>Mitogen-activated protein kinase 8-interacting protein 2</fullName>
    </alternativeName>
</protein>